<protein>
    <recommendedName>
        <fullName>Probable transcriptional regulator PhnF</fullName>
    </recommendedName>
</protein>
<reference key="1">
    <citation type="journal article" date="1990" name="J. Biol. Chem.">
        <title>Molecular biology of carbon-phosphorus bond cleavage. Cloning and sequencing of the phn (psiD) genes involved in alkylphosphonate uptake and C-P lyase activity in Escherichia coli B.</title>
        <authorList>
            <person name="Chen C.-M."/>
            <person name="Ye Q.-Z."/>
            <person name="Zhu Z."/>
            <person name="Wanner B.L."/>
            <person name="Walsh C.T."/>
        </authorList>
    </citation>
    <scope>NUCLEOTIDE SEQUENCE [GENOMIC DNA]</scope>
    <source>
        <strain>B</strain>
    </source>
</reference>
<reference key="2">
    <citation type="journal article" date="1991" name="J. Bacteriol.">
        <title>Molecular analysis of the cryptic and functional phn operons for phosphonate use in Escherichia coli K-12.</title>
        <authorList>
            <person name="Makino K."/>
            <person name="Kim S.K."/>
            <person name="Shinagawa H."/>
            <person name="Amemura M."/>
            <person name="Nakata A."/>
        </authorList>
    </citation>
    <scope>NUCLEOTIDE SEQUENCE [GENOMIC DNA]</scope>
    <source>
        <strain>K12</strain>
    </source>
</reference>
<reference key="3">
    <citation type="journal article" date="1995" name="Nucleic Acids Res.">
        <title>Analysis of the Escherichia coli genome VI: DNA sequence of the region from 92.8 through 100 minutes.</title>
        <authorList>
            <person name="Burland V.D."/>
            <person name="Plunkett G. III"/>
            <person name="Sofia H.J."/>
            <person name="Daniels D.L."/>
            <person name="Blattner F.R."/>
        </authorList>
    </citation>
    <scope>NUCLEOTIDE SEQUENCE [LARGE SCALE GENOMIC DNA]</scope>
    <source>
        <strain>K12 / MG1655 / ATCC 47076</strain>
    </source>
</reference>
<reference key="4">
    <citation type="journal article" date="1997" name="Science">
        <title>The complete genome sequence of Escherichia coli K-12.</title>
        <authorList>
            <person name="Blattner F.R."/>
            <person name="Plunkett G. III"/>
            <person name="Bloch C.A."/>
            <person name="Perna N.T."/>
            <person name="Burland V."/>
            <person name="Riley M."/>
            <person name="Collado-Vides J."/>
            <person name="Glasner J.D."/>
            <person name="Rode C.K."/>
            <person name="Mayhew G.F."/>
            <person name="Gregor J."/>
            <person name="Davis N.W."/>
            <person name="Kirkpatrick H.A."/>
            <person name="Goeden M.A."/>
            <person name="Rose D.J."/>
            <person name="Mau B."/>
            <person name="Shao Y."/>
        </authorList>
    </citation>
    <scope>NUCLEOTIDE SEQUENCE [LARGE SCALE GENOMIC DNA]</scope>
    <source>
        <strain>K12 / MG1655 / ATCC 47076</strain>
    </source>
</reference>
<reference key="5">
    <citation type="journal article" date="2006" name="Mol. Syst. Biol.">
        <title>Highly accurate genome sequences of Escherichia coli K-12 strains MG1655 and W3110.</title>
        <authorList>
            <person name="Hayashi K."/>
            <person name="Morooka N."/>
            <person name="Yamamoto Y."/>
            <person name="Fujita K."/>
            <person name="Isono K."/>
            <person name="Choi S."/>
            <person name="Ohtsubo E."/>
            <person name="Baba T."/>
            <person name="Wanner B.L."/>
            <person name="Mori H."/>
            <person name="Horiuchi T."/>
        </authorList>
    </citation>
    <scope>NUCLEOTIDE SEQUENCE [LARGE SCALE GENOMIC DNA]</scope>
    <source>
        <strain>K12 / W3110 / ATCC 27325 / DSM 5911</strain>
    </source>
</reference>
<organism>
    <name type="scientific">Escherichia coli (strain K12)</name>
    <dbReference type="NCBI Taxonomy" id="83333"/>
    <lineage>
        <taxon>Bacteria</taxon>
        <taxon>Pseudomonadati</taxon>
        <taxon>Pseudomonadota</taxon>
        <taxon>Gammaproteobacteria</taxon>
        <taxon>Enterobacterales</taxon>
        <taxon>Enterobacteriaceae</taxon>
        <taxon>Escherichia</taxon>
    </lineage>
</organism>
<proteinExistence type="evidence at protein level"/>
<keyword id="KW-0002">3D-structure</keyword>
<keyword id="KW-0019">Alkylphosphonate uptake</keyword>
<keyword id="KW-0238">DNA-binding</keyword>
<keyword id="KW-1185">Reference proteome</keyword>
<keyword id="KW-0804">Transcription</keyword>
<keyword id="KW-0805">Transcription regulation</keyword>
<evidence type="ECO:0000255" key="1">
    <source>
        <dbReference type="PROSITE-ProRule" id="PRU00307"/>
    </source>
</evidence>
<evidence type="ECO:0007829" key="2">
    <source>
        <dbReference type="PDB" id="2FA1"/>
    </source>
</evidence>
<gene>
    <name type="primary">phnF</name>
    <name type="ordered locus">b4102</name>
    <name type="ordered locus">JW4063</name>
</gene>
<dbReference type="EMBL" id="J05260">
    <property type="protein sequence ID" value="AAA24343.1"/>
    <property type="molecule type" value="Genomic_DNA"/>
</dbReference>
<dbReference type="EMBL" id="D90227">
    <property type="protein sequence ID" value="BAA14266.1"/>
    <property type="molecule type" value="Genomic_DNA"/>
</dbReference>
<dbReference type="EMBL" id="U14003">
    <property type="protein sequence ID" value="AAA97001.1"/>
    <property type="molecule type" value="Genomic_DNA"/>
</dbReference>
<dbReference type="EMBL" id="U00096">
    <property type="protein sequence ID" value="AAC77063.1"/>
    <property type="molecule type" value="Genomic_DNA"/>
</dbReference>
<dbReference type="EMBL" id="AP009048">
    <property type="protein sequence ID" value="BAE78105.1"/>
    <property type="molecule type" value="Genomic_DNA"/>
</dbReference>
<dbReference type="PIR" id="G35718">
    <property type="entry name" value="G35718"/>
</dbReference>
<dbReference type="RefSeq" id="NP_418526.1">
    <property type="nucleotide sequence ID" value="NC_000913.3"/>
</dbReference>
<dbReference type="RefSeq" id="WP_001295387.1">
    <property type="nucleotide sequence ID" value="NZ_STEB01000014.1"/>
</dbReference>
<dbReference type="PDB" id="2FA1">
    <property type="method" value="X-ray"/>
    <property type="resolution" value="1.70 A"/>
    <property type="chains" value="A/B=85-241"/>
</dbReference>
<dbReference type="PDBsum" id="2FA1"/>
<dbReference type="SMR" id="P16684"/>
<dbReference type="BioGRID" id="4263093">
    <property type="interactions" value="75"/>
</dbReference>
<dbReference type="FunCoup" id="P16684">
    <property type="interactions" value="44"/>
</dbReference>
<dbReference type="IntAct" id="P16684">
    <property type="interactions" value="2"/>
</dbReference>
<dbReference type="STRING" id="511145.b4102"/>
<dbReference type="PaxDb" id="511145-b4102"/>
<dbReference type="EnsemblBacteria" id="AAC77063">
    <property type="protein sequence ID" value="AAC77063"/>
    <property type="gene ID" value="b4102"/>
</dbReference>
<dbReference type="GeneID" id="75203253"/>
<dbReference type="GeneID" id="948617"/>
<dbReference type="KEGG" id="ecj:JW4063"/>
<dbReference type="KEGG" id="eco:b4102"/>
<dbReference type="KEGG" id="ecoc:C3026_22170"/>
<dbReference type="PATRIC" id="fig|1411691.4.peg.2598"/>
<dbReference type="EchoBASE" id="EB0709"/>
<dbReference type="eggNOG" id="COG2188">
    <property type="taxonomic scope" value="Bacteria"/>
</dbReference>
<dbReference type="HOGENOM" id="CLU_063236_2_2_6"/>
<dbReference type="InParanoid" id="P16684"/>
<dbReference type="OMA" id="VRNYVYL"/>
<dbReference type="OrthoDB" id="6626198at2"/>
<dbReference type="PhylomeDB" id="P16684"/>
<dbReference type="BioCyc" id="EcoCyc:EG10715-MONOMER"/>
<dbReference type="EvolutionaryTrace" id="P16684"/>
<dbReference type="PRO" id="PR:P16684"/>
<dbReference type="Proteomes" id="UP000000625">
    <property type="component" value="Chromosome"/>
</dbReference>
<dbReference type="GO" id="GO:0003677">
    <property type="term" value="F:DNA binding"/>
    <property type="evidence" value="ECO:0007669"/>
    <property type="project" value="UniProtKB-KW"/>
</dbReference>
<dbReference type="GO" id="GO:0003700">
    <property type="term" value="F:DNA-binding transcription factor activity"/>
    <property type="evidence" value="ECO:0007669"/>
    <property type="project" value="InterPro"/>
</dbReference>
<dbReference type="GO" id="GO:0015716">
    <property type="term" value="P:organic phosphonate transport"/>
    <property type="evidence" value="ECO:0007669"/>
    <property type="project" value="UniProtKB-KW"/>
</dbReference>
<dbReference type="CDD" id="cd07377">
    <property type="entry name" value="WHTH_GntR"/>
    <property type="match status" value="1"/>
</dbReference>
<dbReference type="Gene3D" id="3.40.1410.10">
    <property type="entry name" value="Chorismate lyase-like"/>
    <property type="match status" value="1"/>
</dbReference>
<dbReference type="Gene3D" id="1.10.10.10">
    <property type="entry name" value="Winged helix-like DNA-binding domain superfamily/Winged helix DNA-binding domain"/>
    <property type="match status" value="1"/>
</dbReference>
<dbReference type="InterPro" id="IPR050679">
    <property type="entry name" value="Bact_HTH_transcr_reg"/>
</dbReference>
<dbReference type="InterPro" id="IPR028978">
    <property type="entry name" value="Chorismate_lyase_/UTRA_dom_sf"/>
</dbReference>
<dbReference type="InterPro" id="IPR012702">
    <property type="entry name" value="CP_lyase_PhnF"/>
</dbReference>
<dbReference type="InterPro" id="IPR000524">
    <property type="entry name" value="Tscrpt_reg_HTH_GntR"/>
</dbReference>
<dbReference type="InterPro" id="IPR011663">
    <property type="entry name" value="UTRA"/>
</dbReference>
<dbReference type="InterPro" id="IPR036388">
    <property type="entry name" value="WH-like_DNA-bd_sf"/>
</dbReference>
<dbReference type="InterPro" id="IPR036390">
    <property type="entry name" value="WH_DNA-bd_sf"/>
</dbReference>
<dbReference type="NCBIfam" id="TIGR02325">
    <property type="entry name" value="C_P_lyase_phnF"/>
    <property type="match status" value="1"/>
</dbReference>
<dbReference type="NCBIfam" id="NF007486">
    <property type="entry name" value="PRK10079.1"/>
    <property type="match status" value="1"/>
</dbReference>
<dbReference type="PANTHER" id="PTHR44846">
    <property type="entry name" value="MANNOSYL-D-GLYCERATE TRANSPORT/METABOLISM SYSTEM REPRESSOR MNGR-RELATED"/>
    <property type="match status" value="1"/>
</dbReference>
<dbReference type="PANTHER" id="PTHR44846:SF16">
    <property type="entry name" value="TRANSCRIPTIONAL REGULATOR PHNF-RELATED"/>
    <property type="match status" value="1"/>
</dbReference>
<dbReference type="Pfam" id="PF00392">
    <property type="entry name" value="GntR"/>
    <property type="match status" value="1"/>
</dbReference>
<dbReference type="Pfam" id="PF07702">
    <property type="entry name" value="UTRA"/>
    <property type="match status" value="1"/>
</dbReference>
<dbReference type="PRINTS" id="PR00035">
    <property type="entry name" value="HTHGNTR"/>
</dbReference>
<dbReference type="SMART" id="SM00345">
    <property type="entry name" value="HTH_GNTR"/>
    <property type="match status" value="1"/>
</dbReference>
<dbReference type="SMART" id="SM00866">
    <property type="entry name" value="UTRA"/>
    <property type="match status" value="1"/>
</dbReference>
<dbReference type="SUPFAM" id="SSF64288">
    <property type="entry name" value="Chorismate lyase-like"/>
    <property type="match status" value="1"/>
</dbReference>
<dbReference type="SUPFAM" id="SSF46785">
    <property type="entry name" value="Winged helix' DNA-binding domain"/>
    <property type="match status" value="1"/>
</dbReference>
<dbReference type="PROSITE" id="PS50949">
    <property type="entry name" value="HTH_GNTR"/>
    <property type="match status" value="1"/>
</dbReference>
<accession>P16684</accession>
<accession>Q2M6K1</accession>
<feature type="chain" id="PRO_0000050667" description="Probable transcriptional regulator PhnF">
    <location>
        <begin position="1"/>
        <end position="241"/>
    </location>
</feature>
<feature type="domain" description="HTH gntR-type" evidence="1">
    <location>
        <begin position="11"/>
        <end position="78"/>
    </location>
</feature>
<feature type="DNA-binding region" description="H-T-H motif" evidence="1">
    <location>
        <begin position="38"/>
        <end position="57"/>
    </location>
</feature>
<feature type="strand" evidence="2">
    <location>
        <begin position="87"/>
        <end position="93"/>
    </location>
</feature>
<feature type="strand" evidence="2">
    <location>
        <begin position="104"/>
        <end position="112"/>
    </location>
</feature>
<feature type="helix" evidence="2">
    <location>
        <begin position="115"/>
        <end position="121"/>
    </location>
</feature>
<feature type="strand" evidence="2">
    <location>
        <begin position="127"/>
        <end position="138"/>
    </location>
</feature>
<feature type="strand" evidence="2">
    <location>
        <begin position="141"/>
        <end position="151"/>
    </location>
</feature>
<feature type="helix" evidence="2">
    <location>
        <begin position="153"/>
        <end position="155"/>
    </location>
</feature>
<feature type="helix" evidence="2">
    <location>
        <begin position="156"/>
        <end position="159"/>
    </location>
</feature>
<feature type="helix" evidence="2">
    <location>
        <begin position="167"/>
        <end position="175"/>
    </location>
</feature>
<feature type="strand" evidence="2">
    <location>
        <begin position="179"/>
        <end position="190"/>
    </location>
</feature>
<feature type="helix" evidence="2">
    <location>
        <begin position="194"/>
        <end position="199"/>
    </location>
</feature>
<feature type="strand" evidence="2">
    <location>
        <begin position="206"/>
        <end position="216"/>
    </location>
</feature>
<feature type="strand" evidence="2">
    <location>
        <begin position="223"/>
        <end position="231"/>
    </location>
</feature>
<feature type="turn" evidence="2">
    <location>
        <begin position="232"/>
        <end position="234"/>
    </location>
</feature>
<feature type="strand" evidence="2">
    <location>
        <begin position="235"/>
        <end position="240"/>
    </location>
</feature>
<name>PHNF_ECOLI</name>
<comment type="function">
    <text>Belongs to an operon involved in alkylphosphonate uptake and C-P lyase. Exact function not known. By similarity could be a transcriptional regulator.</text>
</comment>
<comment type="miscellaneous">
    <text>The sequence shown is that of strains K12 and B.</text>
</comment>
<sequence length="241" mass="27621">MHLSTHPTSYPTRYQEIAAKLEQELRQHYRCGDYLPAEQQLAARFEVNRHTLRRAIDQLVEKGWVQRRQGVGVLVLMRPFDYPLNAQARFSQNLLDQGSHPTSEKLLSVLRPASGHVADALGITEGENVIHLRTLRRVNGVALCLIDHYFADLTLWPTLQRFDSGSLHDFLREQTGIALRRSQTRISARRAQAKECQRLEIPNMSPLLCVRTLNHRDGESSPAEYSVSLTRADMIEFTMEH</sequence>